<sequence length="284" mass="30753">MTKPDLASLEKTIEKAFDERDGINTATRGEVREAVEQSLILLDRGEVRVAEKQADGNWHVNQWLKKAVLLSFRLNPMEVIKGGPGQSSWWDKVPSKFDGWTANEFEKAGFRAVPNCIVRHSAYIAPNAILMPSFVNLGAYVDKGAMIDTWATVGSCAQIGKNVHLSGGVGIGGVLEPMQAGPTIIEDNCFIGARSEVVEGCIVREGSVLGMGVFIGKSTKIVDRATGEVFYGEVPPYSVVVAGTMPGKNVPGENWGPSLYCAVIVKRADEKTRSKTSINELLRD</sequence>
<proteinExistence type="evidence at protein level"/>
<gene>
    <name evidence="1" type="primary">dapD</name>
    <name type="ordered locus">BRA1028</name>
    <name type="ordered locus">BS1330_II1020</name>
</gene>
<protein>
    <recommendedName>
        <fullName evidence="1">2,3,4,5-tetrahydropyridine-2,6-dicarboxylate N-succinyltransferase</fullName>
        <ecNumber evidence="1">2.3.1.117</ecNumber>
    </recommendedName>
    <alternativeName>
        <fullName evidence="1">Tetrahydrodipicolinate N-succinyltransferase</fullName>
        <shortName evidence="1">THDP succinyltransferase</shortName>
        <shortName evidence="1">THP succinyltransferase</shortName>
        <shortName evidence="1">Tetrahydropicolinate succinylase</shortName>
    </alternativeName>
</protein>
<name>DAPD_BRUSU</name>
<keyword id="KW-0002">3D-structure</keyword>
<keyword id="KW-0012">Acyltransferase</keyword>
<keyword id="KW-0028">Amino-acid biosynthesis</keyword>
<keyword id="KW-0963">Cytoplasm</keyword>
<keyword id="KW-0220">Diaminopimelate biosynthesis</keyword>
<keyword id="KW-0457">Lysine biosynthesis</keyword>
<keyword id="KW-0677">Repeat</keyword>
<keyword id="KW-0808">Transferase</keyword>
<feature type="chain" id="PRO_0000196922" description="2,3,4,5-tetrahydropyridine-2,6-dicarboxylate N-succinyltransferase">
    <location>
        <begin position="1"/>
        <end position="284"/>
    </location>
</feature>
<feature type="binding site" evidence="1">
    <location>
        <position position="111"/>
    </location>
    <ligand>
        <name>substrate</name>
    </ligand>
</feature>
<feature type="binding site" evidence="1">
    <location>
        <position position="148"/>
    </location>
    <ligand>
        <name>substrate</name>
    </ligand>
</feature>
<feature type="helix" evidence="2">
    <location>
        <begin position="7"/>
        <end position="18"/>
    </location>
</feature>
<feature type="helix" evidence="2">
    <location>
        <begin position="19"/>
        <end position="22"/>
    </location>
</feature>
<feature type="helix" evidence="2">
    <location>
        <begin position="29"/>
        <end position="43"/>
    </location>
</feature>
<feature type="strand" evidence="2">
    <location>
        <begin position="49"/>
        <end position="52"/>
    </location>
</feature>
<feature type="strand" evidence="2">
    <location>
        <begin position="58"/>
        <end position="60"/>
    </location>
</feature>
<feature type="helix" evidence="2">
    <location>
        <begin position="62"/>
        <end position="74"/>
    </location>
</feature>
<feature type="strand" evidence="2">
    <location>
        <begin position="78"/>
        <end position="81"/>
    </location>
</feature>
<feature type="helix" evidence="2">
    <location>
        <begin position="84"/>
        <end position="86"/>
    </location>
</feature>
<feature type="strand" evidence="2">
    <location>
        <begin position="88"/>
        <end position="92"/>
    </location>
</feature>
<feature type="turn" evidence="2">
    <location>
        <begin position="96"/>
        <end position="99"/>
    </location>
</feature>
<feature type="helix" evidence="2">
    <location>
        <begin position="102"/>
        <end position="108"/>
    </location>
</feature>
<feature type="strand" evidence="2">
    <location>
        <begin position="117"/>
        <end position="119"/>
    </location>
</feature>
<feature type="strand" evidence="2">
    <location>
        <begin position="132"/>
        <end position="135"/>
    </location>
</feature>
<feature type="strand" evidence="2">
    <location>
        <begin position="151"/>
        <end position="153"/>
    </location>
</feature>
<feature type="strand" evidence="2">
    <location>
        <begin position="221"/>
        <end position="223"/>
    </location>
</feature>
<feature type="turn" evidence="2">
    <location>
        <begin position="224"/>
        <end position="226"/>
    </location>
</feature>
<feature type="strand" evidence="2">
    <location>
        <begin position="232"/>
        <end position="234"/>
    </location>
</feature>
<feature type="strand" evidence="2">
    <location>
        <begin position="238"/>
        <end position="246"/>
    </location>
</feature>
<feature type="strand" evidence="2">
    <location>
        <begin position="258"/>
        <end position="267"/>
    </location>
</feature>
<feature type="helix" evidence="2">
    <location>
        <begin position="270"/>
        <end position="275"/>
    </location>
</feature>
<feature type="helix" evidence="2">
    <location>
        <begin position="278"/>
        <end position="283"/>
    </location>
</feature>
<organism>
    <name type="scientific">Brucella suis biovar 1 (strain 1330)</name>
    <dbReference type="NCBI Taxonomy" id="204722"/>
    <lineage>
        <taxon>Bacteria</taxon>
        <taxon>Pseudomonadati</taxon>
        <taxon>Pseudomonadota</taxon>
        <taxon>Alphaproteobacteria</taxon>
        <taxon>Hyphomicrobiales</taxon>
        <taxon>Brucellaceae</taxon>
        <taxon>Brucella/Ochrobactrum group</taxon>
        <taxon>Brucella</taxon>
    </lineage>
</organism>
<accession>Q8FV25</accession>
<accession>G0KE34</accession>
<dbReference type="EC" id="2.3.1.117" evidence="1"/>
<dbReference type="EMBL" id="AE014292">
    <property type="protein sequence ID" value="AAN34196.1"/>
    <property type="molecule type" value="Genomic_DNA"/>
</dbReference>
<dbReference type="EMBL" id="CP002998">
    <property type="protein sequence ID" value="AEM20472.1"/>
    <property type="molecule type" value="Genomic_DNA"/>
</dbReference>
<dbReference type="PIR" id="AD3543">
    <property type="entry name" value="AD3543"/>
</dbReference>
<dbReference type="RefSeq" id="WP_002965622.1">
    <property type="nucleotide sequence ID" value="NZ_KN046805.1"/>
</dbReference>
<dbReference type="PDB" id="3EG4">
    <property type="method" value="X-ray"/>
    <property type="resolution" value="1.87 A"/>
    <property type="chains" value="A=1-284"/>
</dbReference>
<dbReference type="PDBsum" id="3EG4"/>
<dbReference type="SMR" id="Q8FV25"/>
<dbReference type="GeneID" id="97534922"/>
<dbReference type="KEGG" id="bms:BRA1028"/>
<dbReference type="KEGG" id="bsi:BS1330_II1020"/>
<dbReference type="PATRIC" id="fig|204722.21.peg.1090"/>
<dbReference type="HOGENOM" id="CLU_050859_0_1_5"/>
<dbReference type="PhylomeDB" id="Q8FV25"/>
<dbReference type="UniPathway" id="UPA00034">
    <property type="reaction ID" value="UER00019"/>
</dbReference>
<dbReference type="EvolutionaryTrace" id="Q8FV25"/>
<dbReference type="Proteomes" id="UP000007104">
    <property type="component" value="Chromosome II"/>
</dbReference>
<dbReference type="GO" id="GO:0005737">
    <property type="term" value="C:cytoplasm"/>
    <property type="evidence" value="ECO:0007669"/>
    <property type="project" value="UniProtKB-SubCell"/>
</dbReference>
<dbReference type="GO" id="GO:0008666">
    <property type="term" value="F:2,3,4,5-tetrahydropyridine-2,6-dicarboxylate N-succinyltransferase activity"/>
    <property type="evidence" value="ECO:0007669"/>
    <property type="project" value="UniProtKB-UniRule"/>
</dbReference>
<dbReference type="GO" id="GO:0019877">
    <property type="term" value="P:diaminopimelate biosynthetic process"/>
    <property type="evidence" value="ECO:0007669"/>
    <property type="project" value="UniProtKB-UniRule"/>
</dbReference>
<dbReference type="GO" id="GO:0009089">
    <property type="term" value="P:lysine biosynthetic process via diaminopimelate"/>
    <property type="evidence" value="ECO:0007669"/>
    <property type="project" value="UniProtKB-UniRule"/>
</dbReference>
<dbReference type="CDD" id="cd03350">
    <property type="entry name" value="LbH_THP_succinylT"/>
    <property type="match status" value="1"/>
</dbReference>
<dbReference type="Gene3D" id="2.160.10.10">
    <property type="entry name" value="Hexapeptide repeat proteins"/>
    <property type="match status" value="1"/>
</dbReference>
<dbReference type="Gene3D" id="1.10.166.10">
    <property type="entry name" value="Tetrahydrodipicolinate-N-succinyltransferase, N-terminal domain"/>
    <property type="match status" value="1"/>
</dbReference>
<dbReference type="HAMAP" id="MF_00811">
    <property type="entry name" value="DapD"/>
    <property type="match status" value="1"/>
</dbReference>
<dbReference type="InterPro" id="IPR005664">
    <property type="entry name" value="DapD_Trfase_Hexpep_rpt_fam"/>
</dbReference>
<dbReference type="InterPro" id="IPR001451">
    <property type="entry name" value="Hexapep"/>
</dbReference>
<dbReference type="InterPro" id="IPR018357">
    <property type="entry name" value="Hexapep_transf_CS"/>
</dbReference>
<dbReference type="InterPro" id="IPR023180">
    <property type="entry name" value="THP_succinylTrfase_dom1"/>
</dbReference>
<dbReference type="InterPro" id="IPR037133">
    <property type="entry name" value="THP_succinylTrfase_N_sf"/>
</dbReference>
<dbReference type="InterPro" id="IPR050179">
    <property type="entry name" value="Trans_hexapeptide_repeat"/>
</dbReference>
<dbReference type="InterPro" id="IPR011004">
    <property type="entry name" value="Trimer_LpxA-like_sf"/>
</dbReference>
<dbReference type="NCBIfam" id="TIGR00965">
    <property type="entry name" value="dapD"/>
    <property type="match status" value="1"/>
</dbReference>
<dbReference type="NCBIfam" id="NF008808">
    <property type="entry name" value="PRK11830.1"/>
    <property type="match status" value="1"/>
</dbReference>
<dbReference type="PANTHER" id="PTHR43300:SF10">
    <property type="entry name" value="2,3,4,5-TETRAHYDROPYRIDINE-2,6-DICARBOXYLATE N-ACETYLTRANSFERASE"/>
    <property type="match status" value="1"/>
</dbReference>
<dbReference type="PANTHER" id="PTHR43300">
    <property type="entry name" value="ACETYLTRANSFERASE"/>
    <property type="match status" value="1"/>
</dbReference>
<dbReference type="Pfam" id="PF14602">
    <property type="entry name" value="Hexapep_2"/>
    <property type="match status" value="1"/>
</dbReference>
<dbReference type="Pfam" id="PF14805">
    <property type="entry name" value="THDPS_N_2"/>
    <property type="match status" value="1"/>
</dbReference>
<dbReference type="SUPFAM" id="SSF51161">
    <property type="entry name" value="Trimeric LpxA-like enzymes"/>
    <property type="match status" value="1"/>
</dbReference>
<dbReference type="PROSITE" id="PS00101">
    <property type="entry name" value="HEXAPEP_TRANSFERASES"/>
    <property type="match status" value="1"/>
</dbReference>
<evidence type="ECO:0000255" key="1">
    <source>
        <dbReference type="HAMAP-Rule" id="MF_00811"/>
    </source>
</evidence>
<evidence type="ECO:0007829" key="2">
    <source>
        <dbReference type="PDB" id="3EG4"/>
    </source>
</evidence>
<comment type="catalytic activity">
    <reaction evidence="1">
        <text>(S)-2,3,4,5-tetrahydrodipicolinate + succinyl-CoA + H2O = (S)-2-succinylamino-6-oxoheptanedioate + CoA</text>
        <dbReference type="Rhea" id="RHEA:17325"/>
        <dbReference type="ChEBI" id="CHEBI:15377"/>
        <dbReference type="ChEBI" id="CHEBI:15685"/>
        <dbReference type="ChEBI" id="CHEBI:16845"/>
        <dbReference type="ChEBI" id="CHEBI:57287"/>
        <dbReference type="ChEBI" id="CHEBI:57292"/>
        <dbReference type="EC" id="2.3.1.117"/>
    </reaction>
</comment>
<comment type="pathway">
    <text evidence="1">Amino-acid biosynthesis; L-lysine biosynthesis via DAP pathway; LL-2,6-diaminopimelate from (S)-tetrahydrodipicolinate (succinylase route): step 1/3.</text>
</comment>
<comment type="subunit">
    <text evidence="1">Homotrimer.</text>
</comment>
<comment type="subcellular location">
    <subcellularLocation>
        <location evidence="1">Cytoplasm</location>
    </subcellularLocation>
</comment>
<comment type="similarity">
    <text evidence="1">Belongs to the transferase hexapeptide repeat family.</text>
</comment>
<reference key="1">
    <citation type="journal article" date="2002" name="Proc. Natl. Acad. Sci. U.S.A.">
        <title>The Brucella suis genome reveals fundamental similarities between animal and plant pathogens and symbionts.</title>
        <authorList>
            <person name="Paulsen I.T."/>
            <person name="Seshadri R."/>
            <person name="Nelson K.E."/>
            <person name="Eisen J.A."/>
            <person name="Heidelberg J.F."/>
            <person name="Read T.D."/>
            <person name="Dodson R.J."/>
            <person name="Umayam L.A."/>
            <person name="Brinkac L.M."/>
            <person name="Beanan M.J."/>
            <person name="Daugherty S.C."/>
            <person name="DeBoy R.T."/>
            <person name="Durkin A.S."/>
            <person name="Kolonay J.F."/>
            <person name="Madupu R."/>
            <person name="Nelson W.C."/>
            <person name="Ayodeji B."/>
            <person name="Kraul M."/>
            <person name="Shetty J."/>
            <person name="Malek J.A."/>
            <person name="Van Aken S.E."/>
            <person name="Riedmuller S."/>
            <person name="Tettelin H."/>
            <person name="Gill S.R."/>
            <person name="White O."/>
            <person name="Salzberg S.L."/>
            <person name="Hoover D.L."/>
            <person name="Lindler L.E."/>
            <person name="Halling S.M."/>
            <person name="Boyle S.M."/>
            <person name="Fraser C.M."/>
        </authorList>
    </citation>
    <scope>NUCLEOTIDE SEQUENCE [LARGE SCALE GENOMIC DNA]</scope>
    <source>
        <strain>1330</strain>
    </source>
</reference>
<reference key="2">
    <citation type="journal article" date="2011" name="J. Bacteriol.">
        <title>Revised genome sequence of Brucella suis 1330.</title>
        <authorList>
            <person name="Tae H."/>
            <person name="Shallom S."/>
            <person name="Settlage R."/>
            <person name="Preston D."/>
            <person name="Adams L.G."/>
            <person name="Garner H.R."/>
        </authorList>
    </citation>
    <scope>NUCLEOTIDE SEQUENCE [LARGE SCALE GENOMIC DNA]</scope>
    <source>
        <strain>1330</strain>
    </source>
</reference>
<reference key="3">
    <citation type="submission" date="2008-09" db="PDB data bank">
        <title>Crystal structure of 2,3,4,5-tetrahydropyridine-2-carboxylate n-succinyltransferase from Brucella melitensis biovar abortus 2308.</title>
        <authorList>
            <consortium name="Seattle structural genomics center for infectious disease (SSGCID)"/>
        </authorList>
    </citation>
    <scope>X-RAY CRYSTALLOGRAPHY (1.89 ANGSTROMS)</scope>
</reference>